<organism>
    <name type="scientific">Thermoplasma acidophilum (strain ATCC 25905 / DSM 1728 / JCM 9062 / NBRC 15155 / AMRC-C165)</name>
    <dbReference type="NCBI Taxonomy" id="273075"/>
    <lineage>
        <taxon>Archaea</taxon>
        <taxon>Methanobacteriati</taxon>
        <taxon>Thermoplasmatota</taxon>
        <taxon>Thermoplasmata</taxon>
        <taxon>Thermoplasmatales</taxon>
        <taxon>Thermoplasmataceae</taxon>
        <taxon>Thermoplasma</taxon>
    </lineage>
</organism>
<protein>
    <recommendedName>
        <fullName evidence="1">Large ribosomal subunit protein eL39</fullName>
    </recommendedName>
    <alternativeName>
        <fullName>50S ribosomal protein L39e</fullName>
    </alternativeName>
</protein>
<gene>
    <name type="primary">rpl39e</name>
    <name type="ordered locus">Ta0053</name>
</gene>
<dbReference type="EMBL" id="AL445063">
    <property type="protein sequence ID" value="CAC11201.1"/>
    <property type="molecule type" value="Genomic_DNA"/>
</dbReference>
<dbReference type="RefSeq" id="WP_010900481.1">
    <property type="nucleotide sequence ID" value="NC_002578.1"/>
</dbReference>
<dbReference type="SMR" id="Q9HM18"/>
<dbReference type="FunCoup" id="Q9HM18">
    <property type="interactions" value="93"/>
</dbReference>
<dbReference type="STRING" id="273075.gene:9571268"/>
<dbReference type="PaxDb" id="273075-Ta0053"/>
<dbReference type="EnsemblBacteria" id="CAC11201">
    <property type="protein sequence ID" value="CAC11201"/>
    <property type="gene ID" value="CAC11201"/>
</dbReference>
<dbReference type="KEGG" id="tac:Ta0053"/>
<dbReference type="eggNOG" id="arCOG04177">
    <property type="taxonomic scope" value="Archaea"/>
</dbReference>
<dbReference type="HOGENOM" id="CLU_181948_4_0_2"/>
<dbReference type="InParanoid" id="Q9HM18"/>
<dbReference type="OrthoDB" id="65887at2157"/>
<dbReference type="Proteomes" id="UP000001024">
    <property type="component" value="Chromosome"/>
</dbReference>
<dbReference type="GO" id="GO:1990904">
    <property type="term" value="C:ribonucleoprotein complex"/>
    <property type="evidence" value="ECO:0007669"/>
    <property type="project" value="UniProtKB-KW"/>
</dbReference>
<dbReference type="GO" id="GO:0005840">
    <property type="term" value="C:ribosome"/>
    <property type="evidence" value="ECO:0007669"/>
    <property type="project" value="UniProtKB-KW"/>
</dbReference>
<dbReference type="GO" id="GO:0003735">
    <property type="term" value="F:structural constituent of ribosome"/>
    <property type="evidence" value="ECO:0007669"/>
    <property type="project" value="InterPro"/>
</dbReference>
<dbReference type="GO" id="GO:0006412">
    <property type="term" value="P:translation"/>
    <property type="evidence" value="ECO:0007669"/>
    <property type="project" value="UniProtKB-UniRule"/>
</dbReference>
<dbReference type="FunFam" id="1.10.1620.10:FF:000001">
    <property type="entry name" value="60S ribosomal protein-like L39"/>
    <property type="match status" value="1"/>
</dbReference>
<dbReference type="Gene3D" id="1.10.1620.10">
    <property type="entry name" value="Ribosomal protein L39e"/>
    <property type="match status" value="1"/>
</dbReference>
<dbReference type="HAMAP" id="MF_00629">
    <property type="entry name" value="Ribosomal_eL39"/>
    <property type="match status" value="1"/>
</dbReference>
<dbReference type="InterPro" id="IPR000077">
    <property type="entry name" value="Ribosomal_eL39"/>
</dbReference>
<dbReference type="InterPro" id="IPR020083">
    <property type="entry name" value="Ribosomal_eL39_CS"/>
</dbReference>
<dbReference type="InterPro" id="IPR023626">
    <property type="entry name" value="Ribosomal_eL39_dom_sf"/>
</dbReference>
<dbReference type="NCBIfam" id="NF002316">
    <property type="entry name" value="PRK01242.1"/>
    <property type="match status" value="1"/>
</dbReference>
<dbReference type="Pfam" id="PF00832">
    <property type="entry name" value="Ribosomal_L39"/>
    <property type="match status" value="1"/>
</dbReference>
<dbReference type="SUPFAM" id="SSF48662">
    <property type="entry name" value="Ribosomal protein L39e"/>
    <property type="match status" value="1"/>
</dbReference>
<dbReference type="PROSITE" id="PS00051">
    <property type="entry name" value="RIBOSOMAL_L39E"/>
    <property type="match status" value="1"/>
</dbReference>
<evidence type="ECO:0000305" key="1"/>
<accession>Q9HM18</accession>
<proteinExistence type="inferred from homology"/>
<feature type="chain" id="PRO_0000127064" description="Large ribosomal subunit protein eL39">
    <location>
        <begin position="1"/>
        <end position="51"/>
    </location>
</feature>
<sequence>MSRNKELGRKIRLMKKIKQNRRVPGWVMMRTARKVTQNPLRRNWRRGSLKI</sequence>
<name>RL39_THEAC</name>
<reference key="1">
    <citation type="journal article" date="2000" name="Nature">
        <title>The genome sequence of the thermoacidophilic scavenger Thermoplasma acidophilum.</title>
        <authorList>
            <person name="Ruepp A."/>
            <person name="Graml W."/>
            <person name="Santos-Martinez M.-L."/>
            <person name="Koretke K.K."/>
            <person name="Volker C."/>
            <person name="Mewes H.-W."/>
            <person name="Frishman D."/>
            <person name="Stocker S."/>
            <person name="Lupas A.N."/>
            <person name="Baumeister W."/>
        </authorList>
    </citation>
    <scope>NUCLEOTIDE SEQUENCE [LARGE SCALE GENOMIC DNA]</scope>
    <source>
        <strain>ATCC 25905 / DSM 1728 / JCM 9062 / NBRC 15155 / AMRC-C165</strain>
    </source>
</reference>
<comment type="similarity">
    <text evidence="1">Belongs to the eukaryotic ribosomal protein eL39 family.</text>
</comment>
<keyword id="KW-1185">Reference proteome</keyword>
<keyword id="KW-0687">Ribonucleoprotein</keyword>
<keyword id="KW-0689">Ribosomal protein</keyword>